<dbReference type="EC" id="3.2.2.23" evidence="2"/>
<dbReference type="EC" id="4.2.99.18" evidence="2"/>
<dbReference type="EMBL" id="AE017194">
    <property type="protein sequence ID" value="AAS43618.1"/>
    <property type="molecule type" value="Genomic_DNA"/>
</dbReference>
<dbReference type="SMR" id="Q72ZF1"/>
<dbReference type="KEGG" id="bca:BCE_4717"/>
<dbReference type="HOGENOM" id="CLU_038423_1_3_9"/>
<dbReference type="Proteomes" id="UP000002527">
    <property type="component" value="Chromosome"/>
</dbReference>
<dbReference type="GO" id="GO:0034039">
    <property type="term" value="F:8-oxo-7,8-dihydroguanine DNA N-glycosylase activity"/>
    <property type="evidence" value="ECO:0007669"/>
    <property type="project" value="TreeGrafter"/>
</dbReference>
<dbReference type="GO" id="GO:0140078">
    <property type="term" value="F:class I DNA-(apurinic or apyrimidinic site) endonuclease activity"/>
    <property type="evidence" value="ECO:0007669"/>
    <property type="project" value="UniProtKB-EC"/>
</dbReference>
<dbReference type="GO" id="GO:0003684">
    <property type="term" value="F:damaged DNA binding"/>
    <property type="evidence" value="ECO:0007669"/>
    <property type="project" value="InterPro"/>
</dbReference>
<dbReference type="GO" id="GO:0008270">
    <property type="term" value="F:zinc ion binding"/>
    <property type="evidence" value="ECO:0007669"/>
    <property type="project" value="UniProtKB-UniRule"/>
</dbReference>
<dbReference type="GO" id="GO:0006284">
    <property type="term" value="P:base-excision repair"/>
    <property type="evidence" value="ECO:0007669"/>
    <property type="project" value="InterPro"/>
</dbReference>
<dbReference type="CDD" id="cd08966">
    <property type="entry name" value="EcFpg-like_N"/>
    <property type="match status" value="1"/>
</dbReference>
<dbReference type="FunFam" id="1.10.8.50:FF:000003">
    <property type="entry name" value="Formamidopyrimidine-DNA glycosylase"/>
    <property type="match status" value="1"/>
</dbReference>
<dbReference type="FunFam" id="3.20.190.10:FF:000001">
    <property type="entry name" value="Formamidopyrimidine-DNA glycosylase"/>
    <property type="match status" value="1"/>
</dbReference>
<dbReference type="Gene3D" id="1.10.8.50">
    <property type="match status" value="1"/>
</dbReference>
<dbReference type="Gene3D" id="3.20.190.10">
    <property type="entry name" value="MutM-like, N-terminal"/>
    <property type="match status" value="1"/>
</dbReference>
<dbReference type="HAMAP" id="MF_00103">
    <property type="entry name" value="Fapy_DNA_glycosyl"/>
    <property type="match status" value="1"/>
</dbReference>
<dbReference type="InterPro" id="IPR015886">
    <property type="entry name" value="DNA_glyclase/AP_lyase_DNA-bd"/>
</dbReference>
<dbReference type="InterPro" id="IPR015887">
    <property type="entry name" value="DNA_glyclase_Znf_dom_DNA_BS"/>
</dbReference>
<dbReference type="InterPro" id="IPR020629">
    <property type="entry name" value="Formamido-pyr_DNA_Glyclase"/>
</dbReference>
<dbReference type="InterPro" id="IPR012319">
    <property type="entry name" value="FPG_cat"/>
</dbReference>
<dbReference type="InterPro" id="IPR035937">
    <property type="entry name" value="MutM-like_N-ter"/>
</dbReference>
<dbReference type="InterPro" id="IPR010979">
    <property type="entry name" value="Ribosomal_uS13-like_H2TH"/>
</dbReference>
<dbReference type="InterPro" id="IPR000214">
    <property type="entry name" value="Znf_DNA_glyclase/AP_lyase"/>
</dbReference>
<dbReference type="InterPro" id="IPR010663">
    <property type="entry name" value="Znf_FPG/IleRS"/>
</dbReference>
<dbReference type="NCBIfam" id="TIGR00577">
    <property type="entry name" value="fpg"/>
    <property type="match status" value="1"/>
</dbReference>
<dbReference type="NCBIfam" id="NF002211">
    <property type="entry name" value="PRK01103.1"/>
    <property type="match status" value="1"/>
</dbReference>
<dbReference type="PANTHER" id="PTHR22993">
    <property type="entry name" value="FORMAMIDOPYRIMIDINE-DNA GLYCOSYLASE"/>
    <property type="match status" value="1"/>
</dbReference>
<dbReference type="PANTHER" id="PTHR22993:SF9">
    <property type="entry name" value="FORMAMIDOPYRIMIDINE-DNA GLYCOSYLASE"/>
    <property type="match status" value="1"/>
</dbReference>
<dbReference type="Pfam" id="PF01149">
    <property type="entry name" value="Fapy_DNA_glyco"/>
    <property type="match status" value="1"/>
</dbReference>
<dbReference type="Pfam" id="PF06831">
    <property type="entry name" value="H2TH"/>
    <property type="match status" value="1"/>
</dbReference>
<dbReference type="Pfam" id="PF06827">
    <property type="entry name" value="zf-FPG_IleRS"/>
    <property type="match status" value="1"/>
</dbReference>
<dbReference type="SMART" id="SM00898">
    <property type="entry name" value="Fapy_DNA_glyco"/>
    <property type="match status" value="1"/>
</dbReference>
<dbReference type="SMART" id="SM01232">
    <property type="entry name" value="H2TH"/>
    <property type="match status" value="1"/>
</dbReference>
<dbReference type="SUPFAM" id="SSF57716">
    <property type="entry name" value="Glucocorticoid receptor-like (DNA-binding domain)"/>
    <property type="match status" value="1"/>
</dbReference>
<dbReference type="SUPFAM" id="SSF81624">
    <property type="entry name" value="N-terminal domain of MutM-like DNA repair proteins"/>
    <property type="match status" value="1"/>
</dbReference>
<dbReference type="SUPFAM" id="SSF46946">
    <property type="entry name" value="S13-like H2TH domain"/>
    <property type="match status" value="1"/>
</dbReference>
<dbReference type="PROSITE" id="PS51068">
    <property type="entry name" value="FPG_CAT"/>
    <property type="match status" value="1"/>
</dbReference>
<dbReference type="PROSITE" id="PS01242">
    <property type="entry name" value="ZF_FPG_1"/>
    <property type="match status" value="1"/>
</dbReference>
<dbReference type="PROSITE" id="PS51066">
    <property type="entry name" value="ZF_FPG_2"/>
    <property type="match status" value="1"/>
</dbReference>
<keyword id="KW-0227">DNA damage</keyword>
<keyword id="KW-0234">DNA repair</keyword>
<keyword id="KW-0238">DNA-binding</keyword>
<keyword id="KW-0326">Glycosidase</keyword>
<keyword id="KW-0378">Hydrolase</keyword>
<keyword id="KW-0456">Lyase</keyword>
<keyword id="KW-0479">Metal-binding</keyword>
<keyword id="KW-0511">Multifunctional enzyme</keyword>
<keyword id="KW-0862">Zinc</keyword>
<keyword id="KW-0863">Zinc-finger</keyword>
<organism>
    <name type="scientific">Bacillus cereus (strain ATCC 10987 / NRS 248)</name>
    <dbReference type="NCBI Taxonomy" id="222523"/>
    <lineage>
        <taxon>Bacteria</taxon>
        <taxon>Bacillati</taxon>
        <taxon>Bacillota</taxon>
        <taxon>Bacilli</taxon>
        <taxon>Bacillales</taxon>
        <taxon>Bacillaceae</taxon>
        <taxon>Bacillus</taxon>
        <taxon>Bacillus cereus group</taxon>
    </lineage>
</organism>
<name>FPG_BACC1</name>
<reference key="1">
    <citation type="journal article" date="2004" name="Nucleic Acids Res.">
        <title>The genome sequence of Bacillus cereus ATCC 10987 reveals metabolic adaptations and a large plasmid related to Bacillus anthracis pXO1.</title>
        <authorList>
            <person name="Rasko D.A."/>
            <person name="Ravel J."/>
            <person name="Oekstad O.A."/>
            <person name="Helgason E."/>
            <person name="Cer R.Z."/>
            <person name="Jiang L."/>
            <person name="Shores K.A."/>
            <person name="Fouts D.E."/>
            <person name="Tourasse N.J."/>
            <person name="Angiuoli S.V."/>
            <person name="Kolonay J.F."/>
            <person name="Nelson W.C."/>
            <person name="Kolstoe A.-B."/>
            <person name="Fraser C.M."/>
            <person name="Read T.D."/>
        </authorList>
    </citation>
    <scope>NUCLEOTIDE SEQUENCE [LARGE SCALE GENOMIC DNA]</scope>
    <source>
        <strain>ATCC 10987 / NRS 248</strain>
    </source>
</reference>
<feature type="initiator methionine" description="Removed" evidence="1">
    <location>
        <position position="1"/>
    </location>
</feature>
<feature type="chain" id="PRO_0000228411" description="Formamidopyrimidine-DNA glycosylase">
    <location>
        <begin position="2"/>
        <end position="276"/>
    </location>
</feature>
<feature type="zinc finger region" description="FPG-type" evidence="2">
    <location>
        <begin position="240"/>
        <end position="274"/>
    </location>
</feature>
<feature type="active site" description="Schiff-base intermediate with DNA" evidence="2">
    <location>
        <position position="2"/>
    </location>
</feature>
<feature type="active site" description="Proton donor" evidence="2">
    <location>
        <position position="3"/>
    </location>
</feature>
<feature type="active site" description="Proton donor; for beta-elimination activity" evidence="2">
    <location>
        <position position="60"/>
    </location>
</feature>
<feature type="active site" description="Proton donor; for delta-elimination activity" evidence="2">
    <location>
        <position position="264"/>
    </location>
</feature>
<feature type="binding site" evidence="2">
    <location>
        <position position="93"/>
    </location>
    <ligand>
        <name>DNA</name>
        <dbReference type="ChEBI" id="CHEBI:16991"/>
    </ligand>
</feature>
<feature type="binding site" evidence="2">
    <location>
        <position position="112"/>
    </location>
    <ligand>
        <name>DNA</name>
        <dbReference type="ChEBI" id="CHEBI:16991"/>
    </ligand>
</feature>
<accession>Q72ZF1</accession>
<gene>
    <name evidence="2" type="primary">mutM</name>
    <name evidence="2" type="synonym">fpg</name>
    <name type="ordered locus">BCE_4717</name>
</gene>
<comment type="function">
    <text evidence="2">Involved in base excision repair of DNA damaged by oxidation or by mutagenic agents. Acts as a DNA glycosylase that recognizes and removes damaged bases. Has a preference for oxidized purines, such as 7,8-dihydro-8-oxoguanine (8-oxoG). Has AP (apurinic/apyrimidinic) lyase activity and introduces nicks in the DNA strand. Cleaves the DNA backbone by beta-delta elimination to generate a single-strand break at the site of the removed base with both 3'- and 5'-phosphates.</text>
</comment>
<comment type="catalytic activity">
    <reaction evidence="2">
        <text>Hydrolysis of DNA containing ring-opened 7-methylguanine residues, releasing 2,6-diamino-4-hydroxy-5-(N-methyl)formamidopyrimidine.</text>
        <dbReference type="EC" id="3.2.2.23"/>
    </reaction>
</comment>
<comment type="catalytic activity">
    <reaction evidence="2">
        <text>2'-deoxyribonucleotide-(2'-deoxyribose 5'-phosphate)-2'-deoxyribonucleotide-DNA = a 3'-end 2'-deoxyribonucleotide-(2,3-dehydro-2,3-deoxyribose 5'-phosphate)-DNA + a 5'-end 5'-phospho-2'-deoxyribonucleoside-DNA + H(+)</text>
        <dbReference type="Rhea" id="RHEA:66592"/>
        <dbReference type="Rhea" id="RHEA-COMP:13180"/>
        <dbReference type="Rhea" id="RHEA-COMP:16897"/>
        <dbReference type="Rhea" id="RHEA-COMP:17067"/>
        <dbReference type="ChEBI" id="CHEBI:15378"/>
        <dbReference type="ChEBI" id="CHEBI:136412"/>
        <dbReference type="ChEBI" id="CHEBI:157695"/>
        <dbReference type="ChEBI" id="CHEBI:167181"/>
        <dbReference type="EC" id="4.2.99.18"/>
    </reaction>
</comment>
<comment type="cofactor">
    <cofactor evidence="2">
        <name>Zn(2+)</name>
        <dbReference type="ChEBI" id="CHEBI:29105"/>
    </cofactor>
    <text evidence="2">Binds 1 zinc ion per subunit.</text>
</comment>
<comment type="subunit">
    <text evidence="2">Monomer.</text>
</comment>
<comment type="similarity">
    <text evidence="2">Belongs to the FPG family.</text>
</comment>
<proteinExistence type="inferred from homology"/>
<evidence type="ECO:0000250" key="1"/>
<evidence type="ECO:0000255" key="2">
    <source>
        <dbReference type="HAMAP-Rule" id="MF_00103"/>
    </source>
</evidence>
<sequence length="276" mass="31644">MPELPEVENVRRTLENLVTGKTIEDVIVTYPKIVKRPDDAKIFKEMLKGETIENIKRRGKFLLLYVTNYVIVSHLRMEGKFLLHQEDEPIDKHTHVRFLFTDGTELHYKDVRKFGTMHLFKKGEEMNQMPLADLGPEPFDAELTPQYLQERLQKTNRKIKVVLLDQRLLVGLGNIYVDEVLFRSQIHPEREASSLTAEEIERIYEATVTTLGEAVKRGGSTIRTYINSQGQIGSFQELLNVYGKKGEPCVTCGTILEKTVVGGRGTHYCPICQPRI</sequence>
<protein>
    <recommendedName>
        <fullName evidence="2">Formamidopyrimidine-DNA glycosylase</fullName>
        <shortName evidence="2">Fapy-DNA glycosylase</shortName>
        <ecNumber evidence="2">3.2.2.23</ecNumber>
    </recommendedName>
    <alternativeName>
        <fullName evidence="2">DNA-(apurinic or apyrimidinic site) lyase MutM</fullName>
        <shortName evidence="2">AP lyase MutM</shortName>
        <ecNumber evidence="2">4.2.99.18</ecNumber>
    </alternativeName>
</protein>